<name>FAS_RAT</name>
<gene>
    <name type="primary">Fasn</name>
</gene>
<comment type="function">
    <text evidence="8 11 13 14 20">Fatty acid synthetase is a multifunctional enzyme that catalyzes the de novo biosynthesis of long-chain saturated fatty acids starting from acetyl-CoA and malonyl-CoA in the presence of NADPH. This multifunctional protein contains 7 catalytic activities and a site for the binding of the prosthetic group 4'-phosphopantetheine of the acyl carrier protein ([ACP]) domain.</text>
</comment>
<comment type="catalytic activity">
    <reaction evidence="8 13 14">
        <text>acetyl-CoA + n malonyl-CoA + 2n NADPH + 2n H(+) = a long-chain fatty acid + (n+1) CoA + n CO2 + 2n NADP(+).</text>
        <dbReference type="EC" id="2.3.1.85"/>
    </reaction>
</comment>
<comment type="catalytic activity">
    <reaction evidence="11 13 14">
        <text>holo-[ACP] + acetyl-CoA = acetyl-[ACP] + CoA</text>
        <dbReference type="Rhea" id="RHEA:41788"/>
        <dbReference type="Rhea" id="RHEA-COMP:9621"/>
        <dbReference type="Rhea" id="RHEA-COMP:9685"/>
        <dbReference type="ChEBI" id="CHEBI:57287"/>
        <dbReference type="ChEBI" id="CHEBI:57288"/>
        <dbReference type="ChEBI" id="CHEBI:64479"/>
        <dbReference type="ChEBI" id="CHEBI:78446"/>
        <dbReference type="EC" id="2.3.1.38"/>
    </reaction>
    <physiologicalReaction direction="left-to-right" evidence="11 13 14">
        <dbReference type="Rhea" id="RHEA:41789"/>
    </physiologicalReaction>
</comment>
<comment type="catalytic activity">
    <reaction evidence="13">
        <text>holo-[ACP] + malonyl-CoA = malonyl-[ACP] + CoA</text>
        <dbReference type="Rhea" id="RHEA:41792"/>
        <dbReference type="Rhea" id="RHEA-COMP:9623"/>
        <dbReference type="Rhea" id="RHEA-COMP:9685"/>
        <dbReference type="ChEBI" id="CHEBI:57287"/>
        <dbReference type="ChEBI" id="CHEBI:57384"/>
        <dbReference type="ChEBI" id="CHEBI:64479"/>
        <dbReference type="ChEBI" id="CHEBI:78449"/>
        <dbReference type="EC" id="2.3.1.39"/>
    </reaction>
    <physiologicalReaction direction="left-to-right" evidence="13">
        <dbReference type="Rhea" id="RHEA:41793"/>
    </physiologicalReaction>
</comment>
<comment type="catalytic activity">
    <reaction evidence="8 13 14">
        <text>a fatty acyl-[ACP] + malonyl-[ACP] + H(+) = a 3-oxoacyl-[ACP] + holo-[ACP] + CO2</text>
        <dbReference type="Rhea" id="RHEA:22836"/>
        <dbReference type="Rhea" id="RHEA-COMP:9623"/>
        <dbReference type="Rhea" id="RHEA-COMP:9685"/>
        <dbReference type="Rhea" id="RHEA-COMP:9916"/>
        <dbReference type="Rhea" id="RHEA-COMP:14125"/>
        <dbReference type="ChEBI" id="CHEBI:15378"/>
        <dbReference type="ChEBI" id="CHEBI:16526"/>
        <dbReference type="ChEBI" id="CHEBI:64479"/>
        <dbReference type="ChEBI" id="CHEBI:78449"/>
        <dbReference type="ChEBI" id="CHEBI:78776"/>
        <dbReference type="ChEBI" id="CHEBI:138651"/>
        <dbReference type="EC" id="2.3.1.41"/>
    </reaction>
    <physiologicalReaction direction="left-to-right" evidence="8 13 14">
        <dbReference type="Rhea" id="RHEA:22837"/>
    </physiologicalReaction>
</comment>
<comment type="catalytic activity">
    <reaction evidence="17 18 19">
        <text>a (3R)-hydroxyacyl-[ACP] + NADP(+) = a 3-oxoacyl-[ACP] + NADPH + H(+)</text>
        <dbReference type="Rhea" id="RHEA:17397"/>
        <dbReference type="Rhea" id="RHEA-COMP:9916"/>
        <dbReference type="Rhea" id="RHEA-COMP:9945"/>
        <dbReference type="ChEBI" id="CHEBI:15378"/>
        <dbReference type="ChEBI" id="CHEBI:57783"/>
        <dbReference type="ChEBI" id="CHEBI:58349"/>
        <dbReference type="ChEBI" id="CHEBI:78776"/>
        <dbReference type="ChEBI" id="CHEBI:78827"/>
        <dbReference type="EC" id="1.1.1.100"/>
    </reaction>
    <physiologicalReaction direction="right-to-left" evidence="17 18 19">
        <dbReference type="Rhea" id="RHEA:17399"/>
    </physiologicalReaction>
</comment>
<comment type="catalytic activity">
    <reaction evidence="11 13 19">
        <text>a (3R)-hydroxyacyl-[ACP] = a (2E)-enoyl-[ACP] + H2O</text>
        <dbReference type="Rhea" id="RHEA:13097"/>
        <dbReference type="Rhea" id="RHEA-COMP:9925"/>
        <dbReference type="Rhea" id="RHEA-COMP:9945"/>
        <dbReference type="ChEBI" id="CHEBI:15377"/>
        <dbReference type="ChEBI" id="CHEBI:78784"/>
        <dbReference type="ChEBI" id="CHEBI:78827"/>
        <dbReference type="EC" id="4.2.1.59"/>
    </reaction>
    <physiologicalReaction direction="left-to-right" evidence="11 13 19">
        <dbReference type="Rhea" id="RHEA:13098"/>
    </physiologicalReaction>
</comment>
<comment type="catalytic activity">
    <reaction evidence="17 18 19">
        <text>a 2,3-saturated acyl-[ACP] + NADP(+) = a (2E)-enoyl-[ACP] + NADPH + H(+)</text>
        <dbReference type="Rhea" id="RHEA:22564"/>
        <dbReference type="Rhea" id="RHEA-COMP:9925"/>
        <dbReference type="Rhea" id="RHEA-COMP:9926"/>
        <dbReference type="ChEBI" id="CHEBI:15378"/>
        <dbReference type="ChEBI" id="CHEBI:57783"/>
        <dbReference type="ChEBI" id="CHEBI:58349"/>
        <dbReference type="ChEBI" id="CHEBI:78784"/>
        <dbReference type="ChEBI" id="CHEBI:78785"/>
        <dbReference type="EC" id="1.3.1.39"/>
    </reaction>
    <physiologicalReaction direction="right-to-left" evidence="17 18 19">
        <dbReference type="Rhea" id="RHEA:22566"/>
    </physiologicalReaction>
</comment>
<comment type="catalytic activity">
    <reaction evidence="17 18 19">
        <text>hexadecanoyl-[ACP] + H2O = hexadecanoate + holo-[ACP] + H(+)</text>
        <dbReference type="Rhea" id="RHEA:41932"/>
        <dbReference type="Rhea" id="RHEA-COMP:9652"/>
        <dbReference type="Rhea" id="RHEA-COMP:9685"/>
        <dbReference type="ChEBI" id="CHEBI:7896"/>
        <dbReference type="ChEBI" id="CHEBI:15377"/>
        <dbReference type="ChEBI" id="CHEBI:15378"/>
        <dbReference type="ChEBI" id="CHEBI:64479"/>
        <dbReference type="ChEBI" id="CHEBI:78483"/>
        <dbReference type="EC" id="3.1.2.14"/>
    </reaction>
    <physiologicalReaction direction="left-to-right" evidence="17 18 19">
        <dbReference type="Rhea" id="RHEA:41933"/>
    </physiologicalReaction>
</comment>
<comment type="catalytic activity">
    <reaction evidence="13">
        <text>acetyl-[ACP] + malonyl-[ACP] + H(+) = 3-oxobutanoyl-[ACP] + holo-[ACP] + CO2</text>
        <dbReference type="Rhea" id="RHEA:41800"/>
        <dbReference type="Rhea" id="RHEA-COMP:9621"/>
        <dbReference type="Rhea" id="RHEA-COMP:9623"/>
        <dbReference type="Rhea" id="RHEA-COMP:9625"/>
        <dbReference type="Rhea" id="RHEA-COMP:9685"/>
        <dbReference type="ChEBI" id="CHEBI:15378"/>
        <dbReference type="ChEBI" id="CHEBI:16526"/>
        <dbReference type="ChEBI" id="CHEBI:64479"/>
        <dbReference type="ChEBI" id="CHEBI:78446"/>
        <dbReference type="ChEBI" id="CHEBI:78449"/>
        <dbReference type="ChEBI" id="CHEBI:78450"/>
    </reaction>
    <physiologicalReaction direction="left-to-right" evidence="13">
        <dbReference type="Rhea" id="RHEA:41801"/>
    </physiologicalReaction>
</comment>
<comment type="catalytic activity">
    <reaction evidence="18">
        <text>3-oxobutanoyl-[ACP] + NADPH + H(+) = (3R)-hydroxybutanoyl-[ACP] + NADP(+)</text>
        <dbReference type="Rhea" id="RHEA:41804"/>
        <dbReference type="Rhea" id="RHEA-COMP:9625"/>
        <dbReference type="Rhea" id="RHEA-COMP:9626"/>
        <dbReference type="ChEBI" id="CHEBI:15378"/>
        <dbReference type="ChEBI" id="CHEBI:57783"/>
        <dbReference type="ChEBI" id="CHEBI:58349"/>
        <dbReference type="ChEBI" id="CHEBI:78450"/>
        <dbReference type="ChEBI" id="CHEBI:78451"/>
    </reaction>
    <physiologicalReaction direction="left-to-right" evidence="18">
        <dbReference type="Rhea" id="RHEA:41805"/>
    </physiologicalReaction>
</comment>
<comment type="catalytic activity">
    <reaction evidence="11 18">
        <text>(3R)-hydroxybutanoyl-[ACP] = (2E)-butenoyl-[ACP] + H2O</text>
        <dbReference type="Rhea" id="RHEA:41808"/>
        <dbReference type="Rhea" id="RHEA-COMP:9626"/>
        <dbReference type="Rhea" id="RHEA-COMP:9627"/>
        <dbReference type="ChEBI" id="CHEBI:15377"/>
        <dbReference type="ChEBI" id="CHEBI:78451"/>
        <dbReference type="ChEBI" id="CHEBI:78453"/>
    </reaction>
    <physiologicalReaction direction="left-to-right" evidence="11 18">
        <dbReference type="Rhea" id="RHEA:41809"/>
    </physiologicalReaction>
</comment>
<comment type="catalytic activity">
    <reaction evidence="18">
        <text>(2E)-butenoyl-[ACP] + NADPH + H(+) = butanoyl-[ACP] + NADP(+)</text>
        <dbReference type="Rhea" id="RHEA:41812"/>
        <dbReference type="Rhea" id="RHEA-COMP:9627"/>
        <dbReference type="Rhea" id="RHEA-COMP:9628"/>
        <dbReference type="ChEBI" id="CHEBI:15378"/>
        <dbReference type="ChEBI" id="CHEBI:57783"/>
        <dbReference type="ChEBI" id="CHEBI:58349"/>
        <dbReference type="ChEBI" id="CHEBI:78453"/>
        <dbReference type="ChEBI" id="CHEBI:78454"/>
    </reaction>
    <physiologicalReaction direction="left-to-right" evidence="18">
        <dbReference type="Rhea" id="RHEA:41813"/>
    </physiologicalReaction>
</comment>
<comment type="catalytic activity">
    <reaction evidence="3">
        <text>butanoyl-[ACP] + malonyl-[ACP] + H(+) = 3-oxohexanoyl-[ACP] + holo-[ACP] + CO2</text>
        <dbReference type="Rhea" id="RHEA:41820"/>
        <dbReference type="Rhea" id="RHEA-COMP:9623"/>
        <dbReference type="Rhea" id="RHEA-COMP:9628"/>
        <dbReference type="Rhea" id="RHEA-COMP:9629"/>
        <dbReference type="Rhea" id="RHEA-COMP:9685"/>
        <dbReference type="ChEBI" id="CHEBI:15378"/>
        <dbReference type="ChEBI" id="CHEBI:16526"/>
        <dbReference type="ChEBI" id="CHEBI:64479"/>
        <dbReference type="ChEBI" id="CHEBI:78449"/>
        <dbReference type="ChEBI" id="CHEBI:78454"/>
        <dbReference type="ChEBI" id="CHEBI:78456"/>
    </reaction>
    <physiologicalReaction direction="left-to-right" evidence="3">
        <dbReference type="Rhea" id="RHEA:41821"/>
    </physiologicalReaction>
</comment>
<comment type="catalytic activity">
    <reaction evidence="3">
        <text>3-oxohexanoyl-[ACP] + NADPH + H(+) = (3R)-hydroxyhexanoyl-[ACP] + NADP(+)</text>
        <dbReference type="Rhea" id="RHEA:41824"/>
        <dbReference type="Rhea" id="RHEA-COMP:9629"/>
        <dbReference type="Rhea" id="RHEA-COMP:9630"/>
        <dbReference type="ChEBI" id="CHEBI:15378"/>
        <dbReference type="ChEBI" id="CHEBI:57783"/>
        <dbReference type="ChEBI" id="CHEBI:58349"/>
        <dbReference type="ChEBI" id="CHEBI:78456"/>
        <dbReference type="ChEBI" id="CHEBI:78457"/>
    </reaction>
    <physiologicalReaction direction="left-to-right" evidence="3">
        <dbReference type="Rhea" id="RHEA:41825"/>
    </physiologicalReaction>
</comment>
<comment type="catalytic activity">
    <reaction evidence="11">
        <text>(3R)-hydroxyhexanoyl-[ACP] = (2E)-hexenoyl-[ACP] + H2O</text>
        <dbReference type="Rhea" id="RHEA:41828"/>
        <dbReference type="Rhea" id="RHEA-COMP:9630"/>
        <dbReference type="Rhea" id="RHEA-COMP:9631"/>
        <dbReference type="ChEBI" id="CHEBI:15377"/>
        <dbReference type="ChEBI" id="CHEBI:78457"/>
        <dbReference type="ChEBI" id="CHEBI:78458"/>
    </reaction>
    <physiologicalReaction direction="left-to-right" evidence="11">
        <dbReference type="Rhea" id="RHEA:41829"/>
    </physiologicalReaction>
</comment>
<comment type="catalytic activity">
    <reaction evidence="3">
        <text>(2E)-hexenoyl-[ACP] + NADPH + H(+) = hexanoyl-[ACP] + NADP(+)</text>
        <dbReference type="Rhea" id="RHEA:41832"/>
        <dbReference type="Rhea" id="RHEA-COMP:9631"/>
        <dbReference type="Rhea" id="RHEA-COMP:9632"/>
        <dbReference type="ChEBI" id="CHEBI:15378"/>
        <dbReference type="ChEBI" id="CHEBI:57783"/>
        <dbReference type="ChEBI" id="CHEBI:58349"/>
        <dbReference type="ChEBI" id="CHEBI:78458"/>
        <dbReference type="ChEBI" id="CHEBI:78459"/>
    </reaction>
    <physiologicalReaction direction="left-to-right" evidence="3">
        <dbReference type="Rhea" id="RHEA:41833"/>
    </physiologicalReaction>
</comment>
<comment type="catalytic activity">
    <reaction evidence="3">
        <text>hexanoyl-[ACP] + malonyl-[ACP] + H(+) = 3-oxooctanoyl-[ACP] + holo-[ACP] + CO2</text>
        <dbReference type="Rhea" id="RHEA:41836"/>
        <dbReference type="Rhea" id="RHEA-COMP:9623"/>
        <dbReference type="Rhea" id="RHEA-COMP:9632"/>
        <dbReference type="Rhea" id="RHEA-COMP:9633"/>
        <dbReference type="Rhea" id="RHEA-COMP:9685"/>
        <dbReference type="ChEBI" id="CHEBI:15378"/>
        <dbReference type="ChEBI" id="CHEBI:16526"/>
        <dbReference type="ChEBI" id="CHEBI:64479"/>
        <dbReference type="ChEBI" id="CHEBI:78449"/>
        <dbReference type="ChEBI" id="CHEBI:78459"/>
        <dbReference type="ChEBI" id="CHEBI:78460"/>
    </reaction>
    <physiologicalReaction direction="left-to-right" evidence="3">
        <dbReference type="Rhea" id="RHEA:41837"/>
    </physiologicalReaction>
</comment>
<comment type="catalytic activity">
    <reaction evidence="3">
        <text>3-oxooctanoyl-[ACP] + NADPH + H(+) = (3R)-hydroxyoctanoyl-[ACP] + NADP(+)</text>
        <dbReference type="Rhea" id="RHEA:41840"/>
        <dbReference type="Rhea" id="RHEA-COMP:9633"/>
        <dbReference type="Rhea" id="RHEA-COMP:9634"/>
        <dbReference type="ChEBI" id="CHEBI:15378"/>
        <dbReference type="ChEBI" id="CHEBI:57783"/>
        <dbReference type="ChEBI" id="CHEBI:58349"/>
        <dbReference type="ChEBI" id="CHEBI:78460"/>
        <dbReference type="ChEBI" id="CHEBI:78461"/>
    </reaction>
    <physiologicalReaction direction="left-to-right" evidence="3">
        <dbReference type="Rhea" id="RHEA:41841"/>
    </physiologicalReaction>
</comment>
<comment type="catalytic activity">
    <reaction evidence="11">
        <text>(3R)-hydroxyoctanoyl-[ACP] = (2E)-octenoyl-[ACP] + H2O</text>
        <dbReference type="Rhea" id="RHEA:41844"/>
        <dbReference type="Rhea" id="RHEA-COMP:9634"/>
        <dbReference type="Rhea" id="RHEA-COMP:9635"/>
        <dbReference type="ChEBI" id="CHEBI:15377"/>
        <dbReference type="ChEBI" id="CHEBI:78461"/>
        <dbReference type="ChEBI" id="CHEBI:78462"/>
    </reaction>
    <physiologicalReaction direction="left-to-right" evidence="11">
        <dbReference type="Rhea" id="RHEA:41845"/>
    </physiologicalReaction>
</comment>
<comment type="catalytic activity">
    <reaction evidence="3">
        <text>(2E)-octenoyl-[ACP] + NADPH + H(+) = octanoyl-[ACP] + NADP(+)</text>
        <dbReference type="Rhea" id="RHEA:41848"/>
        <dbReference type="Rhea" id="RHEA-COMP:9635"/>
        <dbReference type="Rhea" id="RHEA-COMP:9636"/>
        <dbReference type="ChEBI" id="CHEBI:15378"/>
        <dbReference type="ChEBI" id="CHEBI:57783"/>
        <dbReference type="ChEBI" id="CHEBI:58349"/>
        <dbReference type="ChEBI" id="CHEBI:78462"/>
        <dbReference type="ChEBI" id="CHEBI:78463"/>
    </reaction>
    <physiologicalReaction direction="left-to-right" evidence="3">
        <dbReference type="Rhea" id="RHEA:41849"/>
    </physiologicalReaction>
</comment>
<comment type="catalytic activity">
    <reaction evidence="3">
        <text>octanoyl-[ACP] + malonyl-[ACP] + H(+) = 3-oxodecanoyl-[ACP] + holo-[ACP] + CO2</text>
        <dbReference type="Rhea" id="RHEA:41852"/>
        <dbReference type="Rhea" id="RHEA-COMP:9623"/>
        <dbReference type="Rhea" id="RHEA-COMP:9636"/>
        <dbReference type="Rhea" id="RHEA-COMP:9637"/>
        <dbReference type="Rhea" id="RHEA-COMP:9685"/>
        <dbReference type="ChEBI" id="CHEBI:15378"/>
        <dbReference type="ChEBI" id="CHEBI:16526"/>
        <dbReference type="ChEBI" id="CHEBI:64479"/>
        <dbReference type="ChEBI" id="CHEBI:78449"/>
        <dbReference type="ChEBI" id="CHEBI:78463"/>
        <dbReference type="ChEBI" id="CHEBI:78464"/>
    </reaction>
    <physiologicalReaction direction="left-to-right" evidence="3">
        <dbReference type="Rhea" id="RHEA:41853"/>
    </physiologicalReaction>
</comment>
<comment type="catalytic activity">
    <reaction evidence="3">
        <text>3-oxodecanoyl-[ACP] + NADPH + H(+) = (3R)-hydroxydecanoyl-[ACP] + NADP(+)</text>
        <dbReference type="Rhea" id="RHEA:41856"/>
        <dbReference type="Rhea" id="RHEA-COMP:9637"/>
        <dbReference type="Rhea" id="RHEA-COMP:9638"/>
        <dbReference type="ChEBI" id="CHEBI:15378"/>
        <dbReference type="ChEBI" id="CHEBI:57783"/>
        <dbReference type="ChEBI" id="CHEBI:58349"/>
        <dbReference type="ChEBI" id="CHEBI:78464"/>
        <dbReference type="ChEBI" id="CHEBI:78466"/>
    </reaction>
    <physiologicalReaction direction="left-to-right" evidence="3">
        <dbReference type="Rhea" id="RHEA:41857"/>
    </physiologicalReaction>
</comment>
<comment type="catalytic activity">
    <reaction evidence="3">
        <text>(3R)-hydroxydecanoyl-[ACP] = (2E)-decenoyl-[ACP] + H2O</text>
        <dbReference type="Rhea" id="RHEA:41860"/>
        <dbReference type="Rhea" id="RHEA-COMP:9638"/>
        <dbReference type="Rhea" id="RHEA-COMP:9639"/>
        <dbReference type="ChEBI" id="CHEBI:15377"/>
        <dbReference type="ChEBI" id="CHEBI:78466"/>
        <dbReference type="ChEBI" id="CHEBI:78467"/>
    </reaction>
    <physiologicalReaction direction="left-to-right" evidence="3">
        <dbReference type="Rhea" id="RHEA:41861"/>
    </physiologicalReaction>
</comment>
<comment type="catalytic activity">
    <reaction evidence="3">
        <text>(2E)-decenoyl-[ACP] + NADPH + H(+) = decanoyl-[ACP] + NADP(+)</text>
        <dbReference type="Rhea" id="RHEA:41864"/>
        <dbReference type="Rhea" id="RHEA-COMP:9639"/>
        <dbReference type="Rhea" id="RHEA-COMP:9640"/>
        <dbReference type="ChEBI" id="CHEBI:15378"/>
        <dbReference type="ChEBI" id="CHEBI:57783"/>
        <dbReference type="ChEBI" id="CHEBI:58349"/>
        <dbReference type="ChEBI" id="CHEBI:78467"/>
        <dbReference type="ChEBI" id="CHEBI:78468"/>
    </reaction>
    <physiologicalReaction direction="left-to-right" evidence="3">
        <dbReference type="Rhea" id="RHEA:41865"/>
    </physiologicalReaction>
</comment>
<comment type="catalytic activity">
    <reaction evidence="3">
        <text>decanoyl-[ACP] + malonyl-[ACP] + H(+) = 3-oxododecanoyl-[ACP] + holo-[ACP] + CO2</text>
        <dbReference type="Rhea" id="RHEA:41868"/>
        <dbReference type="Rhea" id="RHEA-COMP:9623"/>
        <dbReference type="Rhea" id="RHEA-COMP:9640"/>
        <dbReference type="Rhea" id="RHEA-COMP:9641"/>
        <dbReference type="Rhea" id="RHEA-COMP:9685"/>
        <dbReference type="ChEBI" id="CHEBI:15378"/>
        <dbReference type="ChEBI" id="CHEBI:16526"/>
        <dbReference type="ChEBI" id="CHEBI:64479"/>
        <dbReference type="ChEBI" id="CHEBI:78449"/>
        <dbReference type="ChEBI" id="CHEBI:78468"/>
        <dbReference type="ChEBI" id="CHEBI:78469"/>
    </reaction>
    <physiologicalReaction direction="left-to-right" evidence="3">
        <dbReference type="Rhea" id="RHEA:41869"/>
    </physiologicalReaction>
</comment>
<comment type="catalytic activity">
    <reaction evidence="3">
        <text>3-oxododecanoyl-[ACP] + NADPH + H(+) = (3R)-hydroxydodecanoyl-[ACP] + NADP(+)</text>
        <dbReference type="Rhea" id="RHEA:41872"/>
        <dbReference type="Rhea" id="RHEA-COMP:9641"/>
        <dbReference type="Rhea" id="RHEA-COMP:9642"/>
        <dbReference type="ChEBI" id="CHEBI:15378"/>
        <dbReference type="ChEBI" id="CHEBI:57783"/>
        <dbReference type="ChEBI" id="CHEBI:58349"/>
        <dbReference type="ChEBI" id="CHEBI:78469"/>
        <dbReference type="ChEBI" id="CHEBI:78470"/>
    </reaction>
    <physiologicalReaction direction="left-to-right" evidence="3">
        <dbReference type="Rhea" id="RHEA:41873"/>
    </physiologicalReaction>
</comment>
<comment type="catalytic activity">
    <reaction evidence="3">
        <text>(3R)-hydroxydodecanoyl-[ACP] = (2E)-dodecenoyl-[ACP] + H2O</text>
        <dbReference type="Rhea" id="RHEA:41876"/>
        <dbReference type="Rhea" id="RHEA-COMP:9642"/>
        <dbReference type="Rhea" id="RHEA-COMP:9643"/>
        <dbReference type="ChEBI" id="CHEBI:15377"/>
        <dbReference type="ChEBI" id="CHEBI:78470"/>
        <dbReference type="ChEBI" id="CHEBI:78472"/>
    </reaction>
    <physiologicalReaction direction="left-to-right" evidence="3">
        <dbReference type="Rhea" id="RHEA:41877"/>
    </physiologicalReaction>
</comment>
<comment type="catalytic activity">
    <reaction evidence="3">
        <text>(2E)-dodecenoyl-[ACP] + NADPH + H(+) = dodecanoyl-[ACP] + NADP(+)</text>
        <dbReference type="Rhea" id="RHEA:41880"/>
        <dbReference type="Rhea" id="RHEA-COMP:9643"/>
        <dbReference type="Rhea" id="RHEA-COMP:9644"/>
        <dbReference type="ChEBI" id="CHEBI:15378"/>
        <dbReference type="ChEBI" id="CHEBI:57783"/>
        <dbReference type="ChEBI" id="CHEBI:58349"/>
        <dbReference type="ChEBI" id="CHEBI:65264"/>
        <dbReference type="ChEBI" id="CHEBI:78472"/>
    </reaction>
    <physiologicalReaction direction="left-to-right" evidence="3">
        <dbReference type="Rhea" id="RHEA:41881"/>
    </physiologicalReaction>
</comment>
<comment type="catalytic activity">
    <reaction evidence="3">
        <text>dodecanoyl-[ACP] + malonyl-[ACP] + H(+) = 3-oxotetradecanoyl-[ACP] + holo-[ACP] + CO2</text>
        <dbReference type="Rhea" id="RHEA:41884"/>
        <dbReference type="Rhea" id="RHEA-COMP:9623"/>
        <dbReference type="Rhea" id="RHEA-COMP:9644"/>
        <dbReference type="Rhea" id="RHEA-COMP:9645"/>
        <dbReference type="Rhea" id="RHEA-COMP:9685"/>
        <dbReference type="ChEBI" id="CHEBI:15378"/>
        <dbReference type="ChEBI" id="CHEBI:16526"/>
        <dbReference type="ChEBI" id="CHEBI:64479"/>
        <dbReference type="ChEBI" id="CHEBI:65264"/>
        <dbReference type="ChEBI" id="CHEBI:78449"/>
        <dbReference type="ChEBI" id="CHEBI:78473"/>
    </reaction>
    <physiologicalReaction direction="left-to-right" evidence="3">
        <dbReference type="Rhea" id="RHEA:41885"/>
    </physiologicalReaction>
</comment>
<comment type="catalytic activity">
    <reaction evidence="3">
        <text>3-oxotetradecanoyl-[ACP] + NADPH + H(+) = (3R)-hydroxytetradecanoyl-[ACP] + NADP(+)</text>
        <dbReference type="Rhea" id="RHEA:41888"/>
        <dbReference type="Rhea" id="RHEA-COMP:9645"/>
        <dbReference type="Rhea" id="RHEA-COMP:9646"/>
        <dbReference type="ChEBI" id="CHEBI:15378"/>
        <dbReference type="ChEBI" id="CHEBI:57783"/>
        <dbReference type="ChEBI" id="CHEBI:58349"/>
        <dbReference type="ChEBI" id="CHEBI:78473"/>
        <dbReference type="ChEBI" id="CHEBI:78474"/>
    </reaction>
    <physiologicalReaction direction="left-to-right" evidence="3">
        <dbReference type="Rhea" id="RHEA:41889"/>
    </physiologicalReaction>
</comment>
<comment type="catalytic activity">
    <reaction evidence="3">
        <text>(3R)-hydroxytetradecanoyl-[ACP] = (2E)-tetradecenoyl-[ACP] + H2O</text>
        <dbReference type="Rhea" id="RHEA:41892"/>
        <dbReference type="Rhea" id="RHEA-COMP:9646"/>
        <dbReference type="Rhea" id="RHEA-COMP:9647"/>
        <dbReference type="ChEBI" id="CHEBI:15377"/>
        <dbReference type="ChEBI" id="CHEBI:78474"/>
        <dbReference type="ChEBI" id="CHEBI:78475"/>
    </reaction>
    <physiologicalReaction direction="left-to-right" evidence="3">
        <dbReference type="Rhea" id="RHEA:41893"/>
    </physiologicalReaction>
</comment>
<comment type="catalytic activity">
    <reaction evidence="3">
        <text>(2E)-tetradecenoyl-[ACP] + NADPH + H(+) = tetradecanoyl-[ACP] + NADP(+)</text>
        <dbReference type="Rhea" id="RHEA:41896"/>
        <dbReference type="Rhea" id="RHEA-COMP:9647"/>
        <dbReference type="Rhea" id="RHEA-COMP:9648"/>
        <dbReference type="ChEBI" id="CHEBI:15378"/>
        <dbReference type="ChEBI" id="CHEBI:57783"/>
        <dbReference type="ChEBI" id="CHEBI:58349"/>
        <dbReference type="ChEBI" id="CHEBI:78475"/>
        <dbReference type="ChEBI" id="CHEBI:78477"/>
    </reaction>
    <physiologicalReaction direction="left-to-right" evidence="3">
        <dbReference type="Rhea" id="RHEA:41897"/>
    </physiologicalReaction>
</comment>
<comment type="catalytic activity">
    <reaction evidence="3">
        <text>tetradecanoyl-[ACP] + malonyl-[ACP] + H(+) = 3-oxohexadecanoyl-[ACP] + holo-[ACP] + CO2</text>
        <dbReference type="Rhea" id="RHEA:41900"/>
        <dbReference type="Rhea" id="RHEA-COMP:9623"/>
        <dbReference type="Rhea" id="RHEA-COMP:9648"/>
        <dbReference type="Rhea" id="RHEA-COMP:9649"/>
        <dbReference type="Rhea" id="RHEA-COMP:9685"/>
        <dbReference type="ChEBI" id="CHEBI:15378"/>
        <dbReference type="ChEBI" id="CHEBI:16526"/>
        <dbReference type="ChEBI" id="CHEBI:64479"/>
        <dbReference type="ChEBI" id="CHEBI:78449"/>
        <dbReference type="ChEBI" id="CHEBI:78477"/>
        <dbReference type="ChEBI" id="CHEBI:78478"/>
    </reaction>
    <physiologicalReaction direction="left-to-right" evidence="3">
        <dbReference type="Rhea" id="RHEA:41901"/>
    </physiologicalReaction>
</comment>
<comment type="catalytic activity">
    <reaction evidence="3">
        <text>3-oxohexadecanoyl-[ACP] + NADPH + H(+) = (3R)-hydroxyhexadecanoyl-[ACP] + NADP(+)</text>
        <dbReference type="Rhea" id="RHEA:41904"/>
        <dbReference type="Rhea" id="RHEA-COMP:9649"/>
        <dbReference type="Rhea" id="RHEA-COMP:9650"/>
        <dbReference type="ChEBI" id="CHEBI:15378"/>
        <dbReference type="ChEBI" id="CHEBI:57783"/>
        <dbReference type="ChEBI" id="CHEBI:58349"/>
        <dbReference type="ChEBI" id="CHEBI:78478"/>
        <dbReference type="ChEBI" id="CHEBI:78480"/>
    </reaction>
    <physiologicalReaction direction="left-to-right" evidence="3">
        <dbReference type="Rhea" id="RHEA:41905"/>
    </physiologicalReaction>
</comment>
<comment type="catalytic activity">
    <reaction evidence="3">
        <text>(3R)-hydroxyhexadecanoyl-[ACP] = (2E)-hexadecenoyl-[ACP] + H2O</text>
        <dbReference type="Rhea" id="RHEA:41908"/>
        <dbReference type="Rhea" id="RHEA-COMP:9650"/>
        <dbReference type="Rhea" id="RHEA-COMP:9651"/>
        <dbReference type="ChEBI" id="CHEBI:15377"/>
        <dbReference type="ChEBI" id="CHEBI:78480"/>
        <dbReference type="ChEBI" id="CHEBI:78481"/>
    </reaction>
    <physiologicalReaction direction="left-to-right" evidence="3">
        <dbReference type="Rhea" id="RHEA:41909"/>
    </physiologicalReaction>
</comment>
<comment type="catalytic activity">
    <reaction evidence="3">
        <text>(2E)-hexadecenoyl-[ACP] + NADPH + H(+) = hexadecanoyl-[ACP] + NADP(+)</text>
        <dbReference type="Rhea" id="RHEA:41912"/>
        <dbReference type="Rhea" id="RHEA-COMP:9651"/>
        <dbReference type="Rhea" id="RHEA-COMP:9652"/>
        <dbReference type="ChEBI" id="CHEBI:15378"/>
        <dbReference type="ChEBI" id="CHEBI:57783"/>
        <dbReference type="ChEBI" id="CHEBI:58349"/>
        <dbReference type="ChEBI" id="CHEBI:78481"/>
        <dbReference type="ChEBI" id="CHEBI:78483"/>
    </reaction>
    <physiologicalReaction direction="left-to-right" evidence="3">
        <dbReference type="Rhea" id="RHEA:41913"/>
    </physiologicalReaction>
</comment>
<comment type="catalytic activity">
    <reaction evidence="3">
        <text>hexadecanoyl-[ACP] + malonyl-[ACP] + H(+) = 3-oxooctadecanoyl-[ACP] + holo-[ACP] + CO2</text>
        <dbReference type="Rhea" id="RHEA:41916"/>
        <dbReference type="Rhea" id="RHEA-COMP:9623"/>
        <dbReference type="Rhea" id="RHEA-COMP:9652"/>
        <dbReference type="Rhea" id="RHEA-COMP:9653"/>
        <dbReference type="Rhea" id="RHEA-COMP:9685"/>
        <dbReference type="ChEBI" id="CHEBI:15378"/>
        <dbReference type="ChEBI" id="CHEBI:16526"/>
        <dbReference type="ChEBI" id="CHEBI:64479"/>
        <dbReference type="ChEBI" id="CHEBI:78449"/>
        <dbReference type="ChEBI" id="CHEBI:78483"/>
        <dbReference type="ChEBI" id="CHEBI:78487"/>
    </reaction>
    <physiologicalReaction direction="left-to-right" evidence="3">
        <dbReference type="Rhea" id="RHEA:41917"/>
    </physiologicalReaction>
</comment>
<comment type="catalytic activity">
    <reaction evidence="3">
        <text>3-oxooctadecanoyl-[ACP] + NADPH + H(+) = (3R)-hydroxyoctadecanoyl-[ACP] + NADP(+)</text>
        <dbReference type="Rhea" id="RHEA:41920"/>
        <dbReference type="Rhea" id="RHEA-COMP:9653"/>
        <dbReference type="Rhea" id="RHEA-COMP:9654"/>
        <dbReference type="ChEBI" id="CHEBI:15378"/>
        <dbReference type="ChEBI" id="CHEBI:57783"/>
        <dbReference type="ChEBI" id="CHEBI:58349"/>
        <dbReference type="ChEBI" id="CHEBI:78487"/>
        <dbReference type="ChEBI" id="CHEBI:78488"/>
    </reaction>
    <physiologicalReaction direction="left-to-right" evidence="3">
        <dbReference type="Rhea" id="RHEA:41921"/>
    </physiologicalReaction>
</comment>
<comment type="catalytic activity">
    <reaction evidence="3">
        <text>(3R)-hydroxyoctadecanoyl-[ACP] = (2E)-octadecenoyl-[ACP] + H2O</text>
        <dbReference type="Rhea" id="RHEA:41924"/>
        <dbReference type="Rhea" id="RHEA-COMP:9654"/>
        <dbReference type="Rhea" id="RHEA-COMP:9655"/>
        <dbReference type="ChEBI" id="CHEBI:15377"/>
        <dbReference type="ChEBI" id="CHEBI:78488"/>
        <dbReference type="ChEBI" id="CHEBI:78489"/>
    </reaction>
    <physiologicalReaction direction="left-to-right" evidence="3">
        <dbReference type="Rhea" id="RHEA:41925"/>
    </physiologicalReaction>
</comment>
<comment type="catalytic activity">
    <reaction evidence="3">
        <text>(2E)-octadecenoyl-[ACP] + NADPH + H(+) = octadecanoyl-[ACP] + NADP(+)</text>
        <dbReference type="Rhea" id="RHEA:41928"/>
        <dbReference type="Rhea" id="RHEA-COMP:9655"/>
        <dbReference type="Rhea" id="RHEA-COMP:9656"/>
        <dbReference type="ChEBI" id="CHEBI:15378"/>
        <dbReference type="ChEBI" id="CHEBI:57783"/>
        <dbReference type="ChEBI" id="CHEBI:58349"/>
        <dbReference type="ChEBI" id="CHEBI:78489"/>
        <dbReference type="ChEBI" id="CHEBI:78495"/>
    </reaction>
    <physiologicalReaction direction="left-to-right" evidence="3">
        <dbReference type="Rhea" id="RHEA:41929"/>
    </physiologicalReaction>
</comment>
<comment type="catalytic activity">
    <reaction evidence="3">
        <text>tetradecanoyl-[ACP] + H2O = tetradecanoate + holo-[ACP] + H(+)</text>
        <dbReference type="Rhea" id="RHEA:30123"/>
        <dbReference type="Rhea" id="RHEA-COMP:9648"/>
        <dbReference type="Rhea" id="RHEA-COMP:9685"/>
        <dbReference type="ChEBI" id="CHEBI:15377"/>
        <dbReference type="ChEBI" id="CHEBI:15378"/>
        <dbReference type="ChEBI" id="CHEBI:30807"/>
        <dbReference type="ChEBI" id="CHEBI:64479"/>
        <dbReference type="ChEBI" id="CHEBI:78477"/>
        <dbReference type="EC" id="3.1.2.14"/>
    </reaction>
    <physiologicalReaction direction="left-to-right" evidence="3">
        <dbReference type="Rhea" id="RHEA:30124"/>
    </physiologicalReaction>
</comment>
<comment type="catalytic activity">
    <reaction evidence="3">
        <text>octadecanoyl-[ACP] + H2O = octadecanoate + holo-[ACP] + H(+)</text>
        <dbReference type="Rhea" id="RHEA:63204"/>
        <dbReference type="Rhea" id="RHEA-COMP:9656"/>
        <dbReference type="Rhea" id="RHEA-COMP:9685"/>
        <dbReference type="ChEBI" id="CHEBI:15377"/>
        <dbReference type="ChEBI" id="CHEBI:15378"/>
        <dbReference type="ChEBI" id="CHEBI:25629"/>
        <dbReference type="ChEBI" id="CHEBI:64479"/>
        <dbReference type="ChEBI" id="CHEBI:78495"/>
    </reaction>
    <physiologicalReaction direction="left-to-right" evidence="3">
        <dbReference type="Rhea" id="RHEA:63205"/>
    </physiologicalReaction>
</comment>
<comment type="activity regulation">
    <text evidence="8 10">Cerulenin, a potent non-competitive pharmacological inhibitor of FAS, binds covalently to the active site of the condensing enzyme region, inactivating a key enzyme step in fatty acid synthesis (PubMed:16969344). Another inhibitor, though less efficient, is C75, a member of the alpha-methylene-gamma-butyrolactone chemical class, also proposed as an antitumour and anti-obesity agent (PubMed:15715522).</text>
</comment>
<comment type="biophysicochemical properties">
    <kinetics>
        <Vmax evidence="8">300.0 nmol/min/mg enzyme for the overall fatty acid synthase reaction</Vmax>
        <Vmax evidence="8">900.0 nmol/min/mg enzyme for the beta-ketoacyl reductase reaction of acetoacetyl-CoA</Vmax>
        <Vmax evidence="8">25.0 nmol/min/mg enzyme for the enoyl reductase reaction</Vmax>
        <Vmax evidence="8">25.0 nmol/min/mg enzyme for the thioesterase reaction</Vmax>
        <Vmax evidence="8 13">3.0 nmol/min/mg enzyme for the beta-ketoacyl synthase reaction</Vmax>
        <Vmax evidence="13">16.0 nmol/min/ug enzyme for the transferase reaction using malonyl-CoA as donor</Vmax>
        <Vmax evidence="13">1.6 nmol/min/ug enzyme for the beta-ketoacyl reductase reaction of acetoacetyl-CoA</Vmax>
        <Vmax evidence="13">2.5 nmol/min/ug enzyme for the fatty acid synthase reaction</Vmax>
        <Vmax evidence="13">0.72 nmol/min/ug enzyme for the thioesterase reaction</Vmax>
        <Vmax evidence="13">1.9 nmol/min/ug enzyme for the enoyl reductase reaction</Vmax>
    </kinetics>
</comment>
<comment type="pathway">
    <text evidence="8 13 14">Lipid metabolism; fatty acid biosynthesis.</text>
</comment>
<comment type="subunit">
    <text evidence="3 9">Homodimer which is arranged in a head to tail fashion (By similarity). Interacts with CEACAM1; this interaction is insulin and phosphorylation-dependent; reduces fatty-acid synthase activity (PubMed:16054098).</text>
</comment>
<comment type="interaction">
    <interactant intactId="EBI-493558">
        <id>P12785</id>
    </interactant>
    <interactant intactId="EBI-493558">
        <id>P12785</id>
        <label>Fasn</label>
    </interactant>
    <organismsDiffer>false</organismsDiffer>
    <experiments>9</experiments>
</comment>
<comment type="subcellular location">
    <subcellularLocation>
        <location evidence="1">Cytoplasm</location>
    </subcellularLocation>
    <subcellularLocation>
        <location evidence="1">Melanosome</location>
    </subcellularLocation>
</comment>
<comment type="induction">
    <text evidence="12">Up-regulated in livers of rats fed on a high carbohydrate diet.</text>
</comment>
<comment type="PTM">
    <text evidence="3">S-nitrosylation of Fatty acid synthase at cysteine residues Cys-1464 or Cys-2085 is important for the enzyme dimerization. In adipocytes, S-nitrosylation of Fatty acid synthase occurs under physiological conditions and gradually increases during adipogenesis.</text>
</comment>
<feature type="chain" id="PRO_0000180279" description="Fatty acid synthase">
    <location>
        <begin position="1"/>
        <end position="2505"/>
    </location>
</feature>
<feature type="domain" description="Ketosynthase family 3 (KS3)" evidence="5">
    <location>
        <begin position="1"/>
        <end position="406"/>
    </location>
</feature>
<feature type="domain" description="PKS/mFAS DH" evidence="6">
    <location>
        <begin position="844"/>
        <end position="1112"/>
    </location>
</feature>
<feature type="domain" description="Carrier" evidence="4">
    <location>
        <begin position="2113"/>
        <end position="2193"/>
    </location>
</feature>
<feature type="region of interest" description="Acyl and malonyl transferases">
    <location>
        <begin position="429"/>
        <end position="817"/>
    </location>
</feature>
<feature type="region of interest" description="N-terminal hotdog fold" evidence="6">
    <location>
        <begin position="844"/>
        <end position="966"/>
    </location>
</feature>
<feature type="region of interest" description="C-terminal hotdog fold" evidence="6">
    <location>
        <begin position="983"/>
        <end position="1112"/>
    </location>
</feature>
<feature type="region of interest" description="Enoyl reductase">
    <location>
        <begin position="1629"/>
        <end position="1857"/>
    </location>
</feature>
<feature type="region of interest" description="Beta-ketoacyl reductase">
    <location>
        <begin position="1858"/>
        <end position="2113"/>
    </location>
</feature>
<feature type="region of interest" description="Thioesterase">
    <location>
        <begin position="2202"/>
        <end position="2505"/>
    </location>
</feature>
<feature type="active site" description="For beta-ketoacyl synthase activity" evidence="5">
    <location>
        <position position="161"/>
    </location>
</feature>
<feature type="active site" description="For beta-ketoacyl synthase activity" evidence="5">
    <location>
        <position position="293"/>
    </location>
</feature>
<feature type="active site" description="For beta-ketoacyl synthase activity" evidence="5">
    <location>
        <position position="331"/>
    </location>
</feature>
<feature type="active site" description="For malonyltransferase activity" evidence="7">
    <location>
        <position position="581"/>
    </location>
</feature>
<feature type="active site" description="Proton acceptor; for dehydratase activity" evidence="6">
    <location>
        <position position="878"/>
    </location>
</feature>
<feature type="active site" description="Proton donor; for dehydratase activity" evidence="6">
    <location>
        <position position="1032"/>
    </location>
</feature>
<feature type="active site" description="For thioesterase activity" evidence="7">
    <location>
        <position position="2302"/>
    </location>
</feature>
<feature type="active site" description="For thioesterase activity" evidence="7">
    <location>
        <position position="2475"/>
    </location>
</feature>
<feature type="binding site" evidence="2">
    <location>
        <begin position="647"/>
        <end position="648"/>
    </location>
    <ligand>
        <name>an acyl-CoA</name>
        <dbReference type="ChEBI" id="CHEBI:58342"/>
    </ligand>
</feature>
<feature type="binding site" evidence="2">
    <location>
        <position position="671"/>
    </location>
    <ligand>
        <name>an acyl-CoA</name>
        <dbReference type="ChEBI" id="CHEBI:58342"/>
    </ligand>
</feature>
<feature type="binding site" evidence="2">
    <location>
        <position position="773"/>
    </location>
    <ligand>
        <name>an acyl-CoA</name>
        <dbReference type="ChEBI" id="CHEBI:58342"/>
    </ligand>
</feature>
<feature type="binding site">
    <location>
        <begin position="1665"/>
        <end position="1682"/>
    </location>
    <ligand>
        <name>NADP(+)</name>
        <dbReference type="ChEBI" id="CHEBI:58349"/>
        <label>1</label>
        <note>for enoyl reductase activity</note>
    </ligand>
</feature>
<feature type="binding site">
    <location>
        <begin position="1765"/>
        <end position="1780"/>
    </location>
    <ligand>
        <name>NADP(+)</name>
        <dbReference type="ChEBI" id="CHEBI:58349"/>
        <label>2</label>
        <note>for ketoreductase activity</note>
    </ligand>
</feature>
<feature type="modified residue" description="N-acetylmethionine" evidence="3">
    <location>
        <position position="1"/>
    </location>
</feature>
<feature type="modified residue" description="N6-acetyllysine" evidence="2">
    <location>
        <position position="59"/>
    </location>
</feature>
<feature type="modified residue" description="Phosphoserine" evidence="3">
    <location>
        <position position="63"/>
    </location>
</feature>
<feature type="modified residue" description="N6-acetyllysine" evidence="3">
    <location>
        <position position="70"/>
    </location>
</feature>
<feature type="modified residue" description="Phosphoserine" evidence="3">
    <location>
        <position position="207"/>
    </location>
</feature>
<feature type="modified residue" description="N6-acetyllysine" evidence="3">
    <location>
        <position position="298"/>
    </location>
</feature>
<feature type="modified residue" description="N6-acetyllysine" evidence="3">
    <location>
        <position position="528"/>
    </location>
</feature>
<feature type="modified residue" description="N6-acetyllysine" evidence="3">
    <location>
        <position position="673"/>
    </location>
</feature>
<feature type="modified residue" description="Phosphoserine" evidence="21">
    <location>
        <position position="725"/>
    </location>
</feature>
<feature type="modified residue" description="N6-acetyllysine" evidence="2">
    <location>
        <position position="790"/>
    </location>
</feature>
<feature type="modified residue" description="N6-acetyllysine" evidence="2">
    <location>
        <position position="993"/>
    </location>
</feature>
<feature type="modified residue" description="N6-acetyllysine" evidence="2">
    <location>
        <position position="1276"/>
    </location>
</feature>
<feature type="modified residue" description="S-nitrosocysteine" evidence="3">
    <location>
        <position position="1464"/>
    </location>
</feature>
<feature type="modified residue" description="Phosphoserine" evidence="21">
    <location>
        <position position="1578"/>
    </location>
</feature>
<feature type="modified residue" description="Phosphoserine" evidence="2">
    <location>
        <position position="1588"/>
    </location>
</feature>
<feature type="modified residue" description="N6-(pyridoxal phosphate)lysine; alternate" evidence="1">
    <location>
        <position position="1698"/>
    </location>
</feature>
<feature type="modified residue" description="N6-acetyllysine; alternate" evidence="3">
    <location>
        <position position="1698"/>
    </location>
</feature>
<feature type="modified residue" description="N6-acetyllysine" evidence="3">
    <location>
        <position position="1765"/>
    </location>
</feature>
<feature type="modified residue" description="N6-acetyllysine" evidence="3">
    <location>
        <position position="1841"/>
    </location>
</feature>
<feature type="modified residue" description="N6-acetyllysine" evidence="3">
    <location>
        <position position="1989"/>
    </location>
</feature>
<feature type="modified residue" description="S-nitrosocysteine" evidence="3">
    <location>
        <position position="2085"/>
    </location>
</feature>
<feature type="modified residue" description="O-(pantetheine 4'-phosphoryl)serine; alternate" evidence="4">
    <location>
        <position position="2151"/>
    </location>
</feature>
<feature type="modified residue" description="Phosphoserine; alternate" evidence="21">
    <location>
        <position position="2151"/>
    </location>
</feature>
<feature type="modified residue" description="Phosphoserine" evidence="21">
    <location>
        <position position="2191"/>
    </location>
</feature>
<feature type="modified residue" description="Phosphoserine" evidence="3">
    <location>
        <position position="2230"/>
    </location>
</feature>
<feature type="modified residue" description="N6-acetyllysine" evidence="2">
    <location>
        <position position="2385"/>
    </location>
</feature>
<feature type="cross-link" description="Glycyl lysine isopeptide (Lys-Gly) (interchain with G-Cter in SUMO2)" evidence="3">
    <location>
        <position position="2443"/>
    </location>
</feature>
<feature type="sequence conflict" description="In Ref. 3; AAA41145." evidence="16" ref="3">
    <original>I</original>
    <variation>T</variation>
    <location>
        <position position="184"/>
    </location>
</feature>
<feature type="sequence conflict" description="In Ref. 4; CAA31780." evidence="16" ref="4">
    <original>S</original>
    <variation>P</variation>
    <location>
        <position position="871"/>
    </location>
</feature>
<feature type="sequence conflict" description="In Ref. 6; AAA41144." evidence="16" ref="6">
    <original>C</original>
    <variation>P</variation>
    <location>
        <position position="2085"/>
    </location>
</feature>
<feature type="sequence conflict" description="In Ref. 1; AAA57219, 3; AAA41145 and 5; CAA31882." evidence="16" ref="1 3 5">
    <original>A</original>
    <variation>V</variation>
    <location>
        <position position="2106"/>
    </location>
</feature>
<feature type="sequence conflict" description="In Ref. 1; AAA57219 and 5; CAA31882." evidence="16" ref="1 5">
    <original>Y</original>
    <variation>H</variation>
    <location>
        <position position="2296"/>
    </location>
</feature>
<feature type="helix" evidence="22">
    <location>
        <begin position="2122"/>
        <end position="2124"/>
    </location>
</feature>
<feature type="helix" evidence="22">
    <location>
        <begin position="2126"/>
        <end position="2130"/>
    </location>
</feature>
<feature type="strand" evidence="22">
    <location>
        <begin position="2140"/>
        <end position="2142"/>
    </location>
</feature>
<feature type="helix" evidence="22">
    <location>
        <begin position="2144"/>
        <end position="2147"/>
    </location>
</feature>
<feature type="helix" evidence="22">
    <location>
        <begin position="2152"/>
        <end position="2164"/>
    </location>
</feature>
<feature type="helix" evidence="22">
    <location>
        <begin position="2171"/>
        <end position="2174"/>
    </location>
</feature>
<feature type="helix" evidence="22">
    <location>
        <begin position="2180"/>
        <end position="2184"/>
    </location>
</feature>
<feature type="strand" evidence="22">
    <location>
        <begin position="2188"/>
        <end position="2190"/>
    </location>
</feature>
<feature type="strand" evidence="22">
    <location>
        <begin position="2192"/>
        <end position="2194"/>
    </location>
</feature>
<evidence type="ECO:0000250" key="1"/>
<evidence type="ECO:0000250" key="2">
    <source>
        <dbReference type="UniProtKB" id="P19096"/>
    </source>
</evidence>
<evidence type="ECO:0000250" key="3">
    <source>
        <dbReference type="UniProtKB" id="P49327"/>
    </source>
</evidence>
<evidence type="ECO:0000255" key="4">
    <source>
        <dbReference type="PROSITE-ProRule" id="PRU00258"/>
    </source>
</evidence>
<evidence type="ECO:0000255" key="5">
    <source>
        <dbReference type="PROSITE-ProRule" id="PRU01348"/>
    </source>
</evidence>
<evidence type="ECO:0000255" key="6">
    <source>
        <dbReference type="PROSITE-ProRule" id="PRU01363"/>
    </source>
</evidence>
<evidence type="ECO:0000255" key="7">
    <source>
        <dbReference type="PROSITE-ProRule" id="PRU10022"/>
    </source>
</evidence>
<evidence type="ECO:0000269" key="8">
    <source>
    </source>
</evidence>
<evidence type="ECO:0000269" key="9">
    <source>
    </source>
</evidence>
<evidence type="ECO:0000269" key="10">
    <source>
    </source>
</evidence>
<evidence type="ECO:0000269" key="11">
    <source>
    </source>
</evidence>
<evidence type="ECO:0000269" key="12">
    <source>
    </source>
</evidence>
<evidence type="ECO:0000269" key="13">
    <source>
    </source>
</evidence>
<evidence type="ECO:0000269" key="14">
    <source>
    </source>
</evidence>
<evidence type="ECO:0000303" key="15">
    <source>
    </source>
</evidence>
<evidence type="ECO:0000305" key="16"/>
<evidence type="ECO:0000305" key="17">
    <source>
    </source>
</evidence>
<evidence type="ECO:0000305" key="18">
    <source>
    </source>
</evidence>
<evidence type="ECO:0000305" key="19">
    <source>
    </source>
</evidence>
<evidence type="ECO:0000305" key="20">
    <source>
    </source>
</evidence>
<evidence type="ECO:0007744" key="21">
    <source>
    </source>
</evidence>
<evidence type="ECO:0007829" key="22">
    <source>
        <dbReference type="PDB" id="2PNG"/>
    </source>
</evidence>
<dbReference type="EC" id="2.3.1.85" evidence="8 13 14"/>
<dbReference type="EC" id="2.3.1.38" evidence="11 13 14"/>
<dbReference type="EC" id="2.3.1.39" evidence="13"/>
<dbReference type="EC" id="2.3.1.41" evidence="8 13 14"/>
<dbReference type="EC" id="1.1.1.100" evidence="17 18 19"/>
<dbReference type="EC" id="4.2.1.59" evidence="11 13"/>
<dbReference type="EC" id="1.3.1.39" evidence="17 18 19"/>
<dbReference type="EC" id="3.1.2.14"/>
<dbReference type="EMBL" id="M76767">
    <property type="protein sequence ID" value="AAA57219.1"/>
    <property type="molecule type" value="mRNA"/>
</dbReference>
<dbReference type="EMBL" id="X62888">
    <property type="protein sequence ID" value="CAA44679.1"/>
    <property type="molecule type" value="mRNA"/>
</dbReference>
<dbReference type="EMBL" id="X62889">
    <property type="protein sequence ID" value="CAA44680.1"/>
    <property type="molecule type" value="Genomic_DNA"/>
</dbReference>
<dbReference type="EMBL" id="M84761">
    <property type="protein sequence ID" value="AAA41145.1"/>
    <property type="molecule type" value="Genomic_DNA"/>
</dbReference>
<dbReference type="EMBL" id="X13415">
    <property type="protein sequence ID" value="CAA31780.1"/>
    <property type="molecule type" value="mRNA"/>
</dbReference>
<dbReference type="EMBL" id="X13527">
    <property type="protein sequence ID" value="CAA31882.1"/>
    <property type="molecule type" value="mRNA"/>
</dbReference>
<dbReference type="EMBL" id="J03514">
    <property type="protein sequence ID" value="AAA41144.1"/>
    <property type="molecule type" value="mRNA"/>
</dbReference>
<dbReference type="PIR" id="A30313">
    <property type="entry name" value="XYRTFA"/>
</dbReference>
<dbReference type="RefSeq" id="NP_059028.2">
    <property type="nucleotide sequence ID" value="NM_017332.2"/>
</dbReference>
<dbReference type="PDB" id="2PNG">
    <property type="method" value="NMR"/>
    <property type="chains" value="A=2114-2202"/>
</dbReference>
<dbReference type="PDBsum" id="2PNG"/>
<dbReference type="BMRB" id="P12785"/>
<dbReference type="SMR" id="P12785"/>
<dbReference type="BioGRID" id="248415">
    <property type="interactions" value="5"/>
</dbReference>
<dbReference type="DIP" id="DIP-33893N"/>
<dbReference type="FunCoup" id="P12785">
    <property type="interactions" value="955"/>
</dbReference>
<dbReference type="IntAct" id="P12785">
    <property type="interactions" value="2"/>
</dbReference>
<dbReference type="MINT" id="P12785"/>
<dbReference type="STRING" id="10116.ENSRNOP00000064445"/>
<dbReference type="BindingDB" id="P12785"/>
<dbReference type="ChEMBL" id="CHEMBL3783"/>
<dbReference type="SwissLipids" id="SLP:000001864"/>
<dbReference type="ESTHER" id="ratno-fas">
    <property type="family name" value="Thioesterase"/>
</dbReference>
<dbReference type="CarbonylDB" id="P12785"/>
<dbReference type="GlyGen" id="P12785">
    <property type="glycosylation" value="2 sites, 1 O-linked glycan (1 site)"/>
</dbReference>
<dbReference type="iPTMnet" id="P12785"/>
<dbReference type="PhosphoSitePlus" id="P12785"/>
<dbReference type="jPOST" id="P12785"/>
<dbReference type="PaxDb" id="10116-ENSRNOP00000064445"/>
<dbReference type="Ensembl" id="ENSRNOT00000073321.3">
    <property type="protein sequence ID" value="ENSRNOP00000064445.1"/>
    <property type="gene ID" value="ENSRNOG00000045636.3"/>
</dbReference>
<dbReference type="GeneID" id="50671"/>
<dbReference type="KEGG" id="rno:50671"/>
<dbReference type="AGR" id="RGD:620665"/>
<dbReference type="CTD" id="2194"/>
<dbReference type="RGD" id="620665">
    <property type="gene designation" value="Fasn"/>
</dbReference>
<dbReference type="eggNOG" id="KOG1202">
    <property type="taxonomic scope" value="Eukaryota"/>
</dbReference>
<dbReference type="GeneTree" id="ENSGT00940000157276"/>
<dbReference type="HOGENOM" id="CLU_000022_31_7_1"/>
<dbReference type="InParanoid" id="P12785"/>
<dbReference type="OrthoDB" id="6503696at2759"/>
<dbReference type="PhylomeDB" id="P12785"/>
<dbReference type="Reactome" id="R-RNO-199220">
    <property type="pathway name" value="Vitamin B5 (pantothenate) metabolism"/>
</dbReference>
<dbReference type="Reactome" id="R-RNO-75105">
    <property type="pathway name" value="Fatty acyl-CoA biosynthesis"/>
</dbReference>
<dbReference type="SABIO-RK" id="P12785"/>
<dbReference type="UniPathway" id="UPA00094"/>
<dbReference type="EvolutionaryTrace" id="P12785"/>
<dbReference type="PRO" id="PR:P12785"/>
<dbReference type="Proteomes" id="UP000002494">
    <property type="component" value="Chromosome 10"/>
</dbReference>
<dbReference type="Bgee" id="ENSRNOG00000045636">
    <property type="expression patterns" value="Expressed in liver and 19 other cell types or tissues"/>
</dbReference>
<dbReference type="GO" id="GO:0005737">
    <property type="term" value="C:cytoplasm"/>
    <property type="evidence" value="ECO:0000314"/>
    <property type="project" value="UniProtKB"/>
</dbReference>
<dbReference type="GO" id="GO:0005829">
    <property type="term" value="C:cytosol"/>
    <property type="evidence" value="ECO:0000304"/>
    <property type="project" value="Reactome"/>
</dbReference>
<dbReference type="GO" id="GO:0042587">
    <property type="term" value="C:glycogen granule"/>
    <property type="evidence" value="ECO:0000266"/>
    <property type="project" value="RGD"/>
</dbReference>
<dbReference type="GO" id="GO:0005794">
    <property type="term" value="C:Golgi apparatus"/>
    <property type="evidence" value="ECO:0007669"/>
    <property type="project" value="Ensembl"/>
</dbReference>
<dbReference type="GO" id="GO:0042470">
    <property type="term" value="C:melanosome"/>
    <property type="evidence" value="ECO:0007669"/>
    <property type="project" value="UniProtKB-SubCell"/>
</dbReference>
<dbReference type="GO" id="GO:0005886">
    <property type="term" value="C:plasma membrane"/>
    <property type="evidence" value="ECO:0007669"/>
    <property type="project" value="Ensembl"/>
</dbReference>
<dbReference type="GO" id="GO:0019171">
    <property type="term" value="F:(3R)-hydroxyacyl-[acyl-carrier-protein] dehydratase activity"/>
    <property type="evidence" value="ECO:0007669"/>
    <property type="project" value="UniProtKB-EC"/>
</dbReference>
<dbReference type="GO" id="GO:0004316">
    <property type="term" value="F:3-oxoacyl-[acyl-carrier-protein] reductase (NADPH) activity"/>
    <property type="evidence" value="ECO:0007669"/>
    <property type="project" value="UniProtKB-EC"/>
</dbReference>
<dbReference type="GO" id="GO:0004315">
    <property type="term" value="F:3-oxoacyl-[acyl-carrier-protein] synthase activity"/>
    <property type="evidence" value="ECO:0007669"/>
    <property type="project" value="UniProtKB-EC"/>
</dbReference>
<dbReference type="GO" id="GO:0004313">
    <property type="term" value="F:[acyl-carrier-protein] S-acetyltransferase activity"/>
    <property type="evidence" value="ECO:0000266"/>
    <property type="project" value="RGD"/>
</dbReference>
<dbReference type="GO" id="GO:0004314">
    <property type="term" value="F:[acyl-carrier-protein] S-malonyltransferase activity"/>
    <property type="evidence" value="ECO:0000315"/>
    <property type="project" value="UniProtKB"/>
</dbReference>
<dbReference type="GO" id="GO:0141148">
    <property type="term" value="F:enoyl-[acyl-carrier-protein] reductase (NADPH) activity"/>
    <property type="evidence" value="ECO:0007669"/>
    <property type="project" value="UniProtKB-EC"/>
</dbReference>
<dbReference type="GO" id="GO:0004312">
    <property type="term" value="F:fatty acid synthase activity"/>
    <property type="evidence" value="ECO:0000314"/>
    <property type="project" value="CACAO"/>
</dbReference>
<dbReference type="GO" id="GO:0016297">
    <property type="term" value="F:fatty acyl-[ACP] hydrolase activity"/>
    <property type="evidence" value="ECO:0007669"/>
    <property type="project" value="UniProtKB-EC"/>
</dbReference>
<dbReference type="GO" id="GO:0042802">
    <property type="term" value="F:identical protein binding"/>
    <property type="evidence" value="ECO:0000353"/>
    <property type="project" value="IntAct"/>
</dbReference>
<dbReference type="GO" id="GO:0031177">
    <property type="term" value="F:phosphopantetheine binding"/>
    <property type="evidence" value="ECO:0007669"/>
    <property type="project" value="InterPro"/>
</dbReference>
<dbReference type="GO" id="GO:0036094">
    <property type="term" value="F:small molecule binding"/>
    <property type="evidence" value="ECO:0000266"/>
    <property type="project" value="RGD"/>
</dbReference>
<dbReference type="GO" id="GO:0006084">
    <property type="term" value="P:acetyl-CoA metabolic process"/>
    <property type="evidence" value="ECO:0000314"/>
    <property type="project" value="RGD"/>
</dbReference>
<dbReference type="GO" id="GO:0071353">
    <property type="term" value="P:cellular response to interleukin-4"/>
    <property type="evidence" value="ECO:0000266"/>
    <property type="project" value="RGD"/>
</dbReference>
<dbReference type="GO" id="GO:0090557">
    <property type="term" value="P:establishment of endothelial intestinal barrier"/>
    <property type="evidence" value="ECO:0000266"/>
    <property type="project" value="RGD"/>
</dbReference>
<dbReference type="GO" id="GO:0008611">
    <property type="term" value="P:ether lipid biosynthetic process"/>
    <property type="evidence" value="ECO:0000266"/>
    <property type="project" value="RGD"/>
</dbReference>
<dbReference type="GO" id="GO:0006633">
    <property type="term" value="P:fatty acid biosynthetic process"/>
    <property type="evidence" value="ECO:0000314"/>
    <property type="project" value="RGD"/>
</dbReference>
<dbReference type="GO" id="GO:0002068">
    <property type="term" value="P:glandular epithelial cell development"/>
    <property type="evidence" value="ECO:0000266"/>
    <property type="project" value="RGD"/>
</dbReference>
<dbReference type="GO" id="GO:0006954">
    <property type="term" value="P:inflammatory response"/>
    <property type="evidence" value="ECO:0000266"/>
    <property type="project" value="RGD"/>
</dbReference>
<dbReference type="GO" id="GO:0008610">
    <property type="term" value="P:lipid biosynthetic process"/>
    <property type="evidence" value="ECO:0000266"/>
    <property type="project" value="RGD"/>
</dbReference>
<dbReference type="GO" id="GO:0030879">
    <property type="term" value="P:mammary gland development"/>
    <property type="evidence" value="ECO:0000266"/>
    <property type="project" value="RGD"/>
</dbReference>
<dbReference type="GO" id="GO:0044788">
    <property type="term" value="P:modulation by host of viral process"/>
    <property type="evidence" value="ECO:0007669"/>
    <property type="project" value="Ensembl"/>
</dbReference>
<dbReference type="GO" id="GO:0030224">
    <property type="term" value="P:monocyte differentiation"/>
    <property type="evidence" value="ECO:0000266"/>
    <property type="project" value="RGD"/>
</dbReference>
<dbReference type="GO" id="GO:0030223">
    <property type="term" value="P:neutrophil differentiation"/>
    <property type="evidence" value="ECO:0000266"/>
    <property type="project" value="RGD"/>
</dbReference>
<dbReference type="GO" id="GO:0007584">
    <property type="term" value="P:response to nutrient"/>
    <property type="evidence" value="ECO:0000270"/>
    <property type="project" value="RGD"/>
</dbReference>
<dbReference type="GO" id="GO:0031667">
    <property type="term" value="P:response to nutrient levels"/>
    <property type="evidence" value="ECO:0000270"/>
    <property type="project" value="RGD"/>
</dbReference>
<dbReference type="GO" id="GO:0009888">
    <property type="term" value="P:tissue development"/>
    <property type="evidence" value="ECO:0000266"/>
    <property type="project" value="RGD"/>
</dbReference>
<dbReference type="CDD" id="cd05195">
    <property type="entry name" value="enoyl_red"/>
    <property type="match status" value="1"/>
</dbReference>
<dbReference type="CDD" id="cd08954">
    <property type="entry name" value="KR_1_FAS_SDR_x"/>
    <property type="match status" value="2"/>
</dbReference>
<dbReference type="CDD" id="cd00833">
    <property type="entry name" value="PKS"/>
    <property type="match status" value="1"/>
</dbReference>
<dbReference type="FunFam" id="1.10.1200.10:FF:000013">
    <property type="entry name" value="Fatty acid synthase"/>
    <property type="match status" value="1"/>
</dbReference>
<dbReference type="FunFam" id="3.10.129.110:FF:000002">
    <property type="entry name" value="Fatty acid synthase"/>
    <property type="match status" value="1"/>
</dbReference>
<dbReference type="FunFam" id="3.40.366.10:FF:000005">
    <property type="entry name" value="Fatty acid synthase"/>
    <property type="match status" value="1"/>
</dbReference>
<dbReference type="FunFam" id="3.40.47.10:FF:000033">
    <property type="entry name" value="Fatty acid synthase"/>
    <property type="match status" value="1"/>
</dbReference>
<dbReference type="FunFam" id="3.40.50.150:FF:000186">
    <property type="entry name" value="Fatty acid synthase"/>
    <property type="match status" value="1"/>
</dbReference>
<dbReference type="FunFam" id="3.40.50.1820:FF:000059">
    <property type="entry name" value="Fatty acid synthase"/>
    <property type="match status" value="1"/>
</dbReference>
<dbReference type="FunFam" id="3.40.50.1820:FF:000105">
    <property type="entry name" value="Fatty acid synthase"/>
    <property type="match status" value="1"/>
</dbReference>
<dbReference type="FunFam" id="3.40.50.720:FF:000249">
    <property type="entry name" value="Fatty acid synthase"/>
    <property type="match status" value="1"/>
</dbReference>
<dbReference type="FunFam" id="3.90.180.10:FF:000015">
    <property type="entry name" value="Fatty acid synthase"/>
    <property type="match status" value="1"/>
</dbReference>
<dbReference type="FunFam" id="3.40.50.720:FF:000209">
    <property type="entry name" value="Polyketide synthase Pks12"/>
    <property type="match status" value="1"/>
</dbReference>
<dbReference type="Gene3D" id="3.30.70.3290">
    <property type="match status" value="1"/>
</dbReference>
<dbReference type="Gene3D" id="3.40.47.10">
    <property type="match status" value="1"/>
</dbReference>
<dbReference type="Gene3D" id="1.10.1200.10">
    <property type="entry name" value="ACP-like"/>
    <property type="match status" value="1"/>
</dbReference>
<dbReference type="Gene3D" id="3.40.50.1820">
    <property type="entry name" value="alpha/beta hydrolase"/>
    <property type="match status" value="2"/>
</dbReference>
<dbReference type="Gene3D" id="3.40.366.10">
    <property type="entry name" value="Malonyl-Coenzyme A Acyl Carrier Protein, domain 2"/>
    <property type="match status" value="1"/>
</dbReference>
<dbReference type="Gene3D" id="3.90.180.10">
    <property type="entry name" value="Medium-chain alcohol dehydrogenases, catalytic domain"/>
    <property type="match status" value="1"/>
</dbReference>
<dbReference type="Gene3D" id="3.40.50.720">
    <property type="entry name" value="NAD(P)-binding Rossmann-like Domain"/>
    <property type="match status" value="1"/>
</dbReference>
<dbReference type="Gene3D" id="3.10.129.110">
    <property type="entry name" value="Polyketide synthase dehydratase"/>
    <property type="match status" value="1"/>
</dbReference>
<dbReference type="Gene3D" id="3.40.50.150">
    <property type="entry name" value="Vaccinia Virus protein VP39"/>
    <property type="match status" value="1"/>
</dbReference>
<dbReference type="InterPro" id="IPR029058">
    <property type="entry name" value="AB_hydrolase_fold"/>
</dbReference>
<dbReference type="InterPro" id="IPR001227">
    <property type="entry name" value="Ac_transferase_dom_sf"/>
</dbReference>
<dbReference type="InterPro" id="IPR036736">
    <property type="entry name" value="ACP-like_sf"/>
</dbReference>
<dbReference type="InterPro" id="IPR014043">
    <property type="entry name" value="Acyl_transferase_dom"/>
</dbReference>
<dbReference type="InterPro" id="IPR016035">
    <property type="entry name" value="Acyl_Trfase/lysoPLipase"/>
</dbReference>
<dbReference type="InterPro" id="IPR049391">
    <property type="entry name" value="FAS_pseudo-KR"/>
</dbReference>
<dbReference type="InterPro" id="IPR011032">
    <property type="entry name" value="GroES-like_sf"/>
</dbReference>
<dbReference type="InterPro" id="IPR018201">
    <property type="entry name" value="Ketoacyl_synth_AS"/>
</dbReference>
<dbReference type="InterPro" id="IPR014031">
    <property type="entry name" value="Ketoacyl_synth_C"/>
</dbReference>
<dbReference type="InterPro" id="IPR014030">
    <property type="entry name" value="Ketoacyl_synth_N"/>
</dbReference>
<dbReference type="InterPro" id="IPR016036">
    <property type="entry name" value="Malonyl_transacylase_ACP-bd"/>
</dbReference>
<dbReference type="InterPro" id="IPR013217">
    <property type="entry name" value="Methyltransf_12"/>
</dbReference>
<dbReference type="InterPro" id="IPR036291">
    <property type="entry name" value="NAD(P)-bd_dom_sf"/>
</dbReference>
<dbReference type="InterPro" id="IPR032821">
    <property type="entry name" value="PKS_assoc"/>
</dbReference>
<dbReference type="InterPro" id="IPR020841">
    <property type="entry name" value="PKS_Beta-ketoAc_synthase_dom"/>
</dbReference>
<dbReference type="InterPro" id="IPR042104">
    <property type="entry name" value="PKS_dehydratase_sf"/>
</dbReference>
<dbReference type="InterPro" id="IPR020807">
    <property type="entry name" value="PKS_DH"/>
</dbReference>
<dbReference type="InterPro" id="IPR049552">
    <property type="entry name" value="PKS_DH_N"/>
</dbReference>
<dbReference type="InterPro" id="IPR020843">
    <property type="entry name" value="PKS_ER"/>
</dbReference>
<dbReference type="InterPro" id="IPR013968">
    <property type="entry name" value="PKS_KR"/>
</dbReference>
<dbReference type="InterPro" id="IPR049900">
    <property type="entry name" value="PKS_mFAS_DH"/>
</dbReference>
<dbReference type="InterPro" id="IPR050091">
    <property type="entry name" value="PKS_NRPS_Biosynth_Enz"/>
</dbReference>
<dbReference type="InterPro" id="IPR020806">
    <property type="entry name" value="PKS_PP-bd"/>
</dbReference>
<dbReference type="InterPro" id="IPR009081">
    <property type="entry name" value="PP-bd_ACP"/>
</dbReference>
<dbReference type="InterPro" id="IPR006162">
    <property type="entry name" value="Ppantetheine_attach_site"/>
</dbReference>
<dbReference type="InterPro" id="IPR029063">
    <property type="entry name" value="SAM-dependent_MTases_sf"/>
</dbReference>
<dbReference type="InterPro" id="IPR001031">
    <property type="entry name" value="Thioesterase"/>
</dbReference>
<dbReference type="InterPro" id="IPR016039">
    <property type="entry name" value="Thiolase-like"/>
</dbReference>
<dbReference type="PANTHER" id="PTHR43775">
    <property type="entry name" value="FATTY ACID SYNTHASE"/>
    <property type="match status" value="1"/>
</dbReference>
<dbReference type="PANTHER" id="PTHR43775:SF7">
    <property type="entry name" value="FATTY ACID SYNTHASE"/>
    <property type="match status" value="1"/>
</dbReference>
<dbReference type="Pfam" id="PF00698">
    <property type="entry name" value="Acyl_transf_1"/>
    <property type="match status" value="1"/>
</dbReference>
<dbReference type="Pfam" id="PF13602">
    <property type="entry name" value="ADH_zinc_N_2"/>
    <property type="match status" value="1"/>
</dbReference>
<dbReference type="Pfam" id="PF21149">
    <property type="entry name" value="FAS_pseudo-KR"/>
    <property type="match status" value="1"/>
</dbReference>
<dbReference type="Pfam" id="PF16197">
    <property type="entry name" value="KAsynt_C_assoc"/>
    <property type="match status" value="1"/>
</dbReference>
<dbReference type="Pfam" id="PF00109">
    <property type="entry name" value="ketoacyl-synt"/>
    <property type="match status" value="1"/>
</dbReference>
<dbReference type="Pfam" id="PF02801">
    <property type="entry name" value="Ketoacyl-synt_C"/>
    <property type="match status" value="1"/>
</dbReference>
<dbReference type="Pfam" id="PF08659">
    <property type="entry name" value="KR"/>
    <property type="match status" value="1"/>
</dbReference>
<dbReference type="Pfam" id="PF08242">
    <property type="entry name" value="Methyltransf_12"/>
    <property type="match status" value="1"/>
</dbReference>
<dbReference type="Pfam" id="PF21089">
    <property type="entry name" value="PKS_DH_N"/>
    <property type="match status" value="1"/>
</dbReference>
<dbReference type="Pfam" id="PF00550">
    <property type="entry name" value="PP-binding"/>
    <property type="match status" value="1"/>
</dbReference>
<dbReference type="Pfam" id="PF00975">
    <property type="entry name" value="Thioesterase"/>
    <property type="match status" value="1"/>
</dbReference>
<dbReference type="SMART" id="SM00827">
    <property type="entry name" value="PKS_AT"/>
    <property type="match status" value="1"/>
</dbReference>
<dbReference type="SMART" id="SM00826">
    <property type="entry name" value="PKS_DH"/>
    <property type="match status" value="1"/>
</dbReference>
<dbReference type="SMART" id="SM00829">
    <property type="entry name" value="PKS_ER"/>
    <property type="match status" value="1"/>
</dbReference>
<dbReference type="SMART" id="SM00822">
    <property type="entry name" value="PKS_KR"/>
    <property type="match status" value="1"/>
</dbReference>
<dbReference type="SMART" id="SM00825">
    <property type="entry name" value="PKS_KS"/>
    <property type="match status" value="1"/>
</dbReference>
<dbReference type="SMART" id="SM00823">
    <property type="entry name" value="PKS_PP"/>
    <property type="match status" value="1"/>
</dbReference>
<dbReference type="SUPFAM" id="SSF47336">
    <property type="entry name" value="ACP-like"/>
    <property type="match status" value="1"/>
</dbReference>
<dbReference type="SUPFAM" id="SSF53474">
    <property type="entry name" value="alpha/beta-Hydrolases"/>
    <property type="match status" value="1"/>
</dbReference>
<dbReference type="SUPFAM" id="SSF52151">
    <property type="entry name" value="FabD/lysophospholipase-like"/>
    <property type="match status" value="1"/>
</dbReference>
<dbReference type="SUPFAM" id="SSF50129">
    <property type="entry name" value="GroES-like"/>
    <property type="match status" value="1"/>
</dbReference>
<dbReference type="SUPFAM" id="SSF51735">
    <property type="entry name" value="NAD(P)-binding Rossmann-fold domains"/>
    <property type="match status" value="2"/>
</dbReference>
<dbReference type="SUPFAM" id="SSF55048">
    <property type="entry name" value="Probable ACP-binding domain of malonyl-CoA ACP transacylase"/>
    <property type="match status" value="1"/>
</dbReference>
<dbReference type="SUPFAM" id="SSF53335">
    <property type="entry name" value="S-adenosyl-L-methionine-dependent methyltransferases"/>
    <property type="match status" value="1"/>
</dbReference>
<dbReference type="SUPFAM" id="SSF53901">
    <property type="entry name" value="Thiolase-like"/>
    <property type="match status" value="1"/>
</dbReference>
<dbReference type="PROSITE" id="PS50075">
    <property type="entry name" value="CARRIER"/>
    <property type="match status" value="1"/>
</dbReference>
<dbReference type="PROSITE" id="PS00606">
    <property type="entry name" value="KS3_1"/>
    <property type="match status" value="1"/>
</dbReference>
<dbReference type="PROSITE" id="PS52004">
    <property type="entry name" value="KS3_2"/>
    <property type="match status" value="1"/>
</dbReference>
<dbReference type="PROSITE" id="PS00012">
    <property type="entry name" value="PHOSPHOPANTETHEINE"/>
    <property type="match status" value="1"/>
</dbReference>
<dbReference type="PROSITE" id="PS52019">
    <property type="entry name" value="PKS_MFAS_DH"/>
    <property type="match status" value="1"/>
</dbReference>
<sequence length="2505" mass="272650">MEEVVIAGMSGKLPESENLQEFWANLIGGVDMVTDDDRRWKAGLYGLPKRSGKLKDLSKFDASFFGVHPKQAHTMDPQLRLLLEVSYEAIVDGGINPASLRGTNTGVWVGVSGSEASEALSRDPETLLGYSMVGCQRAMMANRLSFFFDFKGPSIALDTACSSSLLALQNAYQAIRSGECPAAIVGGINLLLKPNTSVQFMKLGMLSPDGTCRSFDDSGNGYCRAEAVVAVLLTKKSLARRVYATILNAGTNTDGCKEQGVTFPSGEAQEQLIRSLYQPGGVAPESLEYIEAHGTGTKVGDPQELNGITRSLCAFRQSPLLIGSTKSNMGHPEPASGLAALTKVLLSLENGVWAPNLHFHNPNPEIPALLDGRLQVVDRPLPVRGGIVGINSFGFGGANVHVILQPNTQQAPAPAPHAALPHLLHASGRTMEAVQGLLEQGRQHSQDLAFVSMLNDIAATPTAAMPFRGYTVLGVEGHVQEVQQVPASQRPLWFICSGMGTQWRGMGLSLMRLDSFRESILRSDEALKPLGVKVSDLLLSTDEHTFDDIVHSFVSLTAIQIALIDLLTSMGLKPDGIIGHSLGEVACGYADGCLSQREAVLAAYWRGQCIKDANLPAGSMAAVGLSWEECKQRCPPGVVPACHNSEDTVTISGPQAAVNEFVEQLKQEGVFAKEVRTGGLAFHSYFMEGIAPTLLQALKKVIREPRPRSARWLSTSIPEAQWQSSLARTSSAEYNVNNLVSPVLFQEALWHVPEHAVVLEIAPHALLQAVLKRGVKPSCTIIPLMKRDHKDNLEFFLTNLGKVHLTGIDINPNALFPPVEFPVPRGTPLISPHIKWDHSQTWDIPVAEDFPNGSSSSSATVYNIDASSESSDHYLVDHCIDGRVLFPGTGYLYLVWKTLARSLSLSLEETPVVFENVTFHQATILPRTGTVPLEVRLLEASHAFEVSDSGNLIVSGKVYQWEDPDSKLFDHPEVPIPAESESVSRLTQGEVYKELRLRGYDYGPHFQGVYEATLEGEQGKLLWKDNWVTFMDTMLQISILGFSKQSLQLPTRVTAIYIDPATHLQKVYMLEGDTQVADVTTSRCLGVTVSGGVYISRLQTTATSRRQQEQLVPTLEKFVFTPHVEPECLSESAILQKELQLCKGLAKALQTKATQQGLKMTVPGLEDLPQHGLPRLLAAACQLQLNGNLQLELGEVLARERLLLPEDPLISGLLNSQALKACIDTALENLSTLKMKVVEVLAGEGHLYSHISALLNTQPMLQLEYTATDRHPQALKDVQTKLQQHDVAQGQWDPSGPAPTNLGALDLVVCNCALATLGDPALALDNMVAALKDGGFLLMHTVLKGHALGETLACLPSEVQPGPSFLSQEEWESLFSRKALHLVGLKKSFYGTALFLCRRLSPQDKPIFLPVEDTSFQWVDSLKSILATSSSQPVWLTAMNCPTSGVVGLVNCLRKEPGGHRIRCILLSNLSSTSHVPKLDPGSSELQKVLESDLVMNVYRDGAWGAFRHFQLEQDKPEEQTAHAFVNVLTRGDLASIRWVSSPLKHMQPPSSSGAQLCTVYYASLNFRDIMLATGKLSPDAIPGKWASRDCMLGMEFSGRDKCGRRVMGLVPAEGLATSVLLSPDFLWDVPSSWTLEEAASVPVVYTTAYYSLVVRGRIQHGETVLIHSGSGGVGQAAISIALSLGCRVFTTVGSAEKRAYLQARFPQLDDTSFANSRDTSFEQHVLLHTGGKGVDLVLNSLAEEKLQASVRCLAQHGRFLEIGKFDLSNNHPLGMAIFLKNVTFHGILLDALFEGANDSWREVAELLKAGIRDGVVKPLKCTVFPKAQVEDAFRYMAQGKHIGKVLVQVREEEPEAMLPGAQPTLISAISKTFCPEHKSYIITGGLGGFGLELARWLVLRGAQRLVLTSRSGIRTGYQAKHVREWRRQGIHVLVSTSNVSSLEGARALIAEATKLGPVGGVFNLAMVLRDAMLENQTPELFQDVNKPKYNGTLNLDRATREACPELDYFVAFSSVSCGRGNAGQSNYGFANSTMERICEQRRHDGLPGLAVQWGAIGDVGIILEAMGTNDTVVGGTLPQRISSCMEVLDLFLNQPHAVLSSFVLAEKKAVAHGDGEAQRDLVKAVAHILGIRDLAGINLDSSLADLGLDSLMGVEVRQILEREHDLVLPIREVRQLTLRKLQEMSSKAGSDTELAAPKSKNDTSLKQAQLNLSILLVNPEGPTLTRLNSVQSSERPLFLVHPIEGSITVFHSLAAKLSVPTYGLQCTQAAPLDSIPNLAAYYIDCIKQVQPEGPYRVAGYSFGACVAFEMCSQLQAQQGPAPAHNNLFLFDGSHTYVLAYTQSYRAKLTPGCEAEAEAEAICFFIKQFVDAEHSKVLEALLPLKSLEDRVAAAVDLITRSHQSLDRRDLSFAAVSFYYKLRAADQYKPKAKYHGNVILLRAKTGGTYGEDLGADYNLSQVCDGKVSVHIIEGDHRTLLEGRGLESIINIIHSSLAEPRVSVREG</sequence>
<protein>
    <recommendedName>
        <fullName>Fatty acid synthase</fullName>
        <ecNumber evidence="8 13 14">2.3.1.85</ecNumber>
    </recommendedName>
    <alternativeName>
        <fullName evidence="15">Type I FAS</fullName>
    </alternativeName>
    <domain>
        <recommendedName>
            <fullName>[Acyl-carrier-protein] S-acetyltransferase</fullName>
            <ecNumber evidence="11 13 14">2.3.1.38</ecNumber>
        </recommendedName>
    </domain>
    <domain>
        <recommendedName>
            <fullName>[Acyl-carrier-protein] S-malonyltransferase</fullName>
            <ecNumber evidence="13">2.3.1.39</ecNumber>
        </recommendedName>
    </domain>
    <domain>
        <recommendedName>
            <fullName>3-oxoacyl-[acyl-carrier-protein] synthase</fullName>
            <ecNumber evidence="8 13 14">2.3.1.41</ecNumber>
        </recommendedName>
    </domain>
    <domain>
        <recommendedName>
            <fullName>3-oxoacyl-[acyl-carrier-protein] reductase</fullName>
            <ecNumber evidence="17 18 19">1.1.1.100</ecNumber>
        </recommendedName>
    </domain>
    <domain>
        <recommendedName>
            <fullName>3-hydroxyacyl-[acyl-carrier-protein] dehydratase</fullName>
            <ecNumber evidence="11 13">4.2.1.59</ecNumber>
        </recommendedName>
    </domain>
    <domain>
        <recommendedName>
            <fullName>Enoyl-[acyl-carrier-protein] reductase</fullName>
            <ecNumber evidence="17 18 19">1.3.1.39</ecNumber>
        </recommendedName>
    </domain>
    <domain>
        <recommendedName>
            <fullName>Acyl-[acyl-carrier-protein] hydrolase</fullName>
            <ecNumber>3.1.2.14</ecNumber>
        </recommendedName>
    </domain>
</protein>
<organism>
    <name type="scientific">Rattus norvegicus</name>
    <name type="common">Rat</name>
    <dbReference type="NCBI Taxonomy" id="10116"/>
    <lineage>
        <taxon>Eukaryota</taxon>
        <taxon>Metazoa</taxon>
        <taxon>Chordata</taxon>
        <taxon>Craniata</taxon>
        <taxon>Vertebrata</taxon>
        <taxon>Euteleostomi</taxon>
        <taxon>Mammalia</taxon>
        <taxon>Eutheria</taxon>
        <taxon>Euarchontoglires</taxon>
        <taxon>Glires</taxon>
        <taxon>Rodentia</taxon>
        <taxon>Myomorpha</taxon>
        <taxon>Muroidea</taxon>
        <taxon>Muridae</taxon>
        <taxon>Murinae</taxon>
        <taxon>Rattus</taxon>
    </lineage>
</organism>
<reference key="1">
    <citation type="journal article" date="1989" name="Proc. Natl. Acad. Sci. U.S.A.">
        <title>Molecular cloning and sequencing of cDNAs encoding the entire rat fatty acid synthase.</title>
        <authorList>
            <person name="Amy C.M."/>
            <person name="Witkowski A."/>
            <person name="Naggert J."/>
            <person name="Williams B."/>
            <person name="Randhawa Z."/>
            <person name="Smith S."/>
        </authorList>
    </citation>
    <scope>NUCLEOTIDE SEQUENCE [MRNA]</scope>
</reference>
<reference key="2">
    <citation type="journal article" date="1992" name="DNA Seq.">
        <title>The fatty acid synthase (FAS) gene and its promoter in Rattus norvegicus.</title>
        <authorList>
            <person name="Beck K.F."/>
            <person name="Schreglmann R."/>
            <person name="Stathopulos I."/>
            <person name="Klein H."/>
            <person name="Hoch J."/>
            <person name="Schweizer M."/>
        </authorList>
    </citation>
    <scope>NUCLEOTIDE SEQUENCE [GENOMIC DNA / MRNA]</scope>
    <source>
        <strain>Sprague-Dawley</strain>
        <tissue>Liver</tissue>
    </source>
</reference>
<reference key="3">
    <citation type="journal article" date="1992" name="Proc. Natl. Acad. Sci. U.S.A.">
        <title>Intron-exon organization of the gene for the multifunctional animal fatty acid synthase.</title>
        <authorList>
            <person name="Amy C.M."/>
            <person name="Williams-Ahlf B."/>
            <person name="Naggert J."/>
            <person name="Smith S."/>
        </authorList>
    </citation>
    <scope>NUCLEOTIDE SEQUENCE [GENOMIC DNA]</scope>
</reference>
<reference key="4">
    <citation type="journal article" date="1989" name="Nucleic Acids Res.">
        <title>Rat mammary gland fatty acid synthase: localization of the constituent domains and two functional polyadenylation/termination signals in the cDNA.</title>
        <authorList>
            <person name="Schweizer M."/>
            <person name="Takabeyashi K."/>
            <person name="Beck K.F."/>
            <person name="Schreglmann R."/>
        </authorList>
    </citation>
    <scope>NUCLEOTIDE SEQUENCE [MRNA] OF 75-2505</scope>
    <source>
        <strain>Sprague-Dawley</strain>
        <tissue>Mammary gland</tissue>
    </source>
</reference>
<reference key="5">
    <citation type="journal article" date="1987" name="Eur. J. Biochem.">
        <title>Molecular cloning and sequencing of a cDNA encoding the acyl carrier protein and its flanking domains in the mammalian fatty acid synthetase.</title>
        <authorList>
            <person name="Witlowski A."/>
            <person name="Naggert J."/>
            <person name="Mikkelsen J."/>
            <person name="Smith S."/>
        </authorList>
    </citation>
    <scope>NUCLEOTIDE SEQUENCE [MRNA] OF 1921-2324</scope>
    <source>
        <tissue>Mammary gland</tissue>
    </source>
</reference>
<reference key="6">
    <citation type="journal article" date="1988" name="J. Biol. Chem.">
        <title>Molecular cloning and sequencing of a cDNA encoding the thioesterase domain of the rat fatty acid synthetase.</title>
        <authorList>
            <person name="Naggert J."/>
            <person name="Witkowski A."/>
            <person name="Mikkelsen J."/>
            <person name="Smith S."/>
        </authorList>
    </citation>
    <scope>NUCLEOTIDE SEQUENCE [MRNA] OF 2085-2505</scope>
    <source>
        <tissue>Mammary gland</tissue>
    </source>
</reference>
<reference key="7">
    <citation type="journal article" date="1990" name="J. Nutr.">
        <title>Nutritional control of rat liver fatty acid synthase and S14 mRNA abundance.</title>
        <authorList>
            <person name="Clarke S.D."/>
            <person name="Armstrong M.K."/>
            <person name="Jump D.B."/>
        </authorList>
    </citation>
    <scope>NUCLEOTIDE SEQUENCE OF 2377-2413</scope>
    <scope>INDUCTION</scope>
</reference>
<reference key="8">
    <citation type="journal article" date="1993" name="Biochem. J.">
        <title>Construction of a cDNA encoding the multifunctional animal fatty acid synthase and expression in Spodoptera frugiperda cells using baculoviral vectors.</title>
        <authorList>
            <person name="Joshi A.K."/>
            <person name="Smith S."/>
        </authorList>
    </citation>
    <scope>FUNCTION</scope>
    <scope>CATALYTIC ACTIVITY</scope>
    <scope>BIOPHYSICOCHEMICAL PROPERTIES</scope>
    <scope>PATHWAY</scope>
</reference>
<reference key="9">
    <citation type="journal article" date="1996" name="Biochemistry">
        <title>Fatty acid synthase: in vitro complementation of inactive mutants.</title>
        <authorList>
            <person name="Witkowski A."/>
            <person name="Joshi A."/>
            <person name="Smith S."/>
        </authorList>
    </citation>
    <scope>FUNCTION</scope>
    <scope>CATALYTIC ACTIVITY</scope>
    <scope>PATHWAY</scope>
</reference>
<reference key="10">
    <citation type="journal article" date="1997" name="Biochemistry">
        <title>Characterization of the interthiol acyltransferase reaction catalyzed by the beta-ketoacyl synthase domain of the animal fatty acid synthase.</title>
        <authorList>
            <person name="Witkowski A."/>
            <person name="Joshi A.K."/>
            <person name="Smith S."/>
        </authorList>
    </citation>
    <scope>FUNCTION</scope>
</reference>
<reference key="11">
    <citation type="journal article" date="2005" name="Biochem. J.">
        <title>Characterization of the inactivation of rat fatty acid synthase by C75: inhibition of partial reactions and protection by substrates.</title>
        <authorList>
            <person name="Rendina A.R."/>
            <person name="Cheng D."/>
        </authorList>
    </citation>
    <scope>FUNCTION</scope>
    <scope>CATALYTIC ACTIVITY</scope>
    <scope>BIOPHYSICOCHEMICAL PROPERTIES</scope>
    <scope>PATHWAY</scope>
</reference>
<reference key="12">
    <citation type="journal article" date="2005" name="Cell Metab.">
        <title>Insulin acutely decreases hepatic fatty acid synthase activity.</title>
        <authorList>
            <person name="Najjar S.M."/>
            <person name="Yang Y."/>
            <person name="Fernstroem M.A."/>
            <person name="Lee S.J."/>
            <person name="Deangelis A.M."/>
            <person name="Rjaily G.A."/>
            <person name="Al-Share Q.Y."/>
            <person name="Dai T."/>
            <person name="Miller T.A."/>
            <person name="Ratnam S."/>
            <person name="Ruch R.J."/>
            <person name="Smith S."/>
            <person name="Lin S.H."/>
            <person name="Beauchemin N."/>
            <person name="Oyarce A.M."/>
        </authorList>
    </citation>
    <scope>INTERACTION WITH CEACAM1</scope>
</reference>
<reference key="13">
    <citation type="journal article" date="2006" name="Br. J. Cancer">
        <title>Fatty acid synthase: a novel target for antiglioma therapy.</title>
        <authorList>
            <person name="Zhao W."/>
            <person name="Kridel S."/>
            <person name="Thorburn A."/>
            <person name="Kooshki M."/>
            <person name="Little J."/>
            <person name="Hebbar S."/>
            <person name="Robbins M."/>
        </authorList>
    </citation>
    <scope>FUNCTION</scope>
    <scope>ACTIVITY REGULATION</scope>
</reference>
<reference key="14">
    <citation type="journal article" date="2007" name="Chem. Biol.">
        <title>Catalytic residues are shared between two pseudosubunits of the dehydratase domain of the animal fatty acid synthase.</title>
        <authorList>
            <person name="Pasta S."/>
            <person name="Witkowski A."/>
            <person name="Joshi A.K."/>
            <person name="Smith S."/>
        </authorList>
    </citation>
    <scope>FUNCTION</scope>
    <scope>CATALYTIC ACTIVITY</scope>
</reference>
<reference key="15">
    <citation type="journal article" date="2012" name="Nat. Commun.">
        <title>Quantitative maps of protein phosphorylation sites across 14 different rat organs and tissues.</title>
        <authorList>
            <person name="Lundby A."/>
            <person name="Secher A."/>
            <person name="Lage K."/>
            <person name="Nordsborg N.B."/>
            <person name="Dmytriyev A."/>
            <person name="Lundby C."/>
            <person name="Olsen J.V."/>
        </authorList>
    </citation>
    <scope>PHOSPHORYLATION [LARGE SCALE ANALYSIS] AT SER-725; SER-1578; SER-2151 AND SER-2191</scope>
    <scope>IDENTIFICATION BY MASS SPECTROMETRY [LARGE SCALE ANALYSIS]</scope>
</reference>
<reference key="16">
    <citation type="journal article" date="2003" name="Org. Biomol. Chem.">
        <title>The type I rat fatty acid synthase ACP shows structural homology and analogous biochemical properties to type II ACPs.</title>
        <authorList>
            <person name="Reed M.A.C."/>
            <person name="Schweizer M."/>
            <person name="Szafranska A.E."/>
            <person name="Arthur C."/>
            <person name="Nicholson T.P."/>
            <person name="Cox R.J."/>
            <person name="Crosby J."/>
            <person name="Crump M.P."/>
            <person name="Simpson T.J."/>
        </authorList>
    </citation>
    <scope>STRUCTURE BY NMR OF 2114-2202</scope>
</reference>
<proteinExistence type="evidence at protein level"/>
<accession>P12785</accession>
<accession>O09187</accession>
<accession>O09190</accession>
<accession>Q63577</accession>
<accession>Q64717</accession>
<keyword id="KW-0002">3D-structure</keyword>
<keyword id="KW-0007">Acetylation</keyword>
<keyword id="KW-0963">Cytoplasm</keyword>
<keyword id="KW-0275">Fatty acid biosynthesis</keyword>
<keyword id="KW-0276">Fatty acid metabolism</keyword>
<keyword id="KW-0378">Hydrolase</keyword>
<keyword id="KW-1017">Isopeptide bond</keyword>
<keyword id="KW-0444">Lipid biosynthesis</keyword>
<keyword id="KW-0443">Lipid metabolism</keyword>
<keyword id="KW-0456">Lyase</keyword>
<keyword id="KW-0511">Multifunctional enzyme</keyword>
<keyword id="KW-0520">NAD</keyword>
<keyword id="KW-0521">NADP</keyword>
<keyword id="KW-0560">Oxidoreductase</keyword>
<keyword id="KW-0596">Phosphopantetheine</keyword>
<keyword id="KW-0597">Phosphoprotein</keyword>
<keyword id="KW-0663">Pyridoxal phosphate</keyword>
<keyword id="KW-1185">Reference proteome</keyword>
<keyword id="KW-0702">S-nitrosylation</keyword>
<keyword id="KW-0808">Transferase</keyword>
<keyword id="KW-0832">Ubl conjugation</keyword>